<accession>Q2KAR9</accession>
<organism>
    <name type="scientific">Rhizobium etli (strain ATCC 51251 / DSM 11541 / JCM 21823 / NBRC 15573 / CFN 42)</name>
    <dbReference type="NCBI Taxonomy" id="347834"/>
    <lineage>
        <taxon>Bacteria</taxon>
        <taxon>Pseudomonadati</taxon>
        <taxon>Pseudomonadota</taxon>
        <taxon>Alphaproteobacteria</taxon>
        <taxon>Hyphomicrobiales</taxon>
        <taxon>Rhizobiaceae</taxon>
        <taxon>Rhizobium/Agrobacterium group</taxon>
        <taxon>Rhizobium</taxon>
    </lineage>
</organism>
<feature type="chain" id="PRO_1000044804" description="UPF0260 protein RHE_CH01262">
    <location>
        <begin position="1"/>
        <end position="158"/>
    </location>
</feature>
<name>Y1262_RHIEC</name>
<evidence type="ECO:0000255" key="1">
    <source>
        <dbReference type="HAMAP-Rule" id="MF_00676"/>
    </source>
</evidence>
<keyword id="KW-1185">Reference proteome</keyword>
<gene>
    <name type="ordered locus">RHE_CH01262</name>
</gene>
<comment type="similarity">
    <text evidence="1">Belongs to the UPF0260 family.</text>
</comment>
<protein>
    <recommendedName>
        <fullName evidence="1">UPF0260 protein RHE_CH01262</fullName>
    </recommendedName>
</protein>
<proteinExistence type="inferred from homology"/>
<dbReference type="EMBL" id="CP000133">
    <property type="protein sequence ID" value="ABC90067.1"/>
    <property type="molecule type" value="Genomic_DNA"/>
</dbReference>
<dbReference type="RefSeq" id="WP_011424601.1">
    <property type="nucleotide sequence ID" value="NC_007761.1"/>
</dbReference>
<dbReference type="KEGG" id="ret:RHE_CH01262"/>
<dbReference type="eggNOG" id="COG2983">
    <property type="taxonomic scope" value="Bacteria"/>
</dbReference>
<dbReference type="HOGENOM" id="CLU_109769_0_1_5"/>
<dbReference type="OrthoDB" id="9786855at2"/>
<dbReference type="Proteomes" id="UP000001936">
    <property type="component" value="Chromosome"/>
</dbReference>
<dbReference type="HAMAP" id="MF_00676">
    <property type="entry name" value="UPF0260"/>
    <property type="match status" value="1"/>
</dbReference>
<dbReference type="InterPro" id="IPR005358">
    <property type="entry name" value="Puta_zinc/iron-chelating_dom"/>
</dbReference>
<dbReference type="InterPro" id="IPR008228">
    <property type="entry name" value="UCP006173"/>
</dbReference>
<dbReference type="NCBIfam" id="NF003501">
    <property type="entry name" value="PRK05170.1-5"/>
    <property type="match status" value="1"/>
</dbReference>
<dbReference type="NCBIfam" id="NF003507">
    <property type="entry name" value="PRK05170.2-5"/>
    <property type="match status" value="1"/>
</dbReference>
<dbReference type="PANTHER" id="PTHR37421">
    <property type="entry name" value="UPF0260 PROTEIN YCGN"/>
    <property type="match status" value="1"/>
</dbReference>
<dbReference type="PANTHER" id="PTHR37421:SF1">
    <property type="entry name" value="UPF0260 PROTEIN YCGN"/>
    <property type="match status" value="1"/>
</dbReference>
<dbReference type="Pfam" id="PF03692">
    <property type="entry name" value="CxxCxxCC"/>
    <property type="match status" value="1"/>
</dbReference>
<dbReference type="PIRSF" id="PIRSF006173">
    <property type="entry name" value="UCP006173"/>
    <property type="match status" value="1"/>
</dbReference>
<reference key="1">
    <citation type="journal article" date="2006" name="Proc. Natl. Acad. Sci. U.S.A.">
        <title>The partitioned Rhizobium etli genome: genetic and metabolic redundancy in seven interacting replicons.</title>
        <authorList>
            <person name="Gonzalez V."/>
            <person name="Santamaria R.I."/>
            <person name="Bustos P."/>
            <person name="Hernandez-Gonzalez I."/>
            <person name="Medrano-Soto A."/>
            <person name="Moreno-Hagelsieb G."/>
            <person name="Janga S.C."/>
            <person name="Ramirez M.A."/>
            <person name="Jimenez-Jacinto V."/>
            <person name="Collado-Vides J."/>
            <person name="Davila G."/>
        </authorList>
    </citation>
    <scope>NUCLEOTIDE SEQUENCE [LARGE SCALE GENOMIC DNA]</scope>
    <source>
        <strain>ATCC 51251 / DSM 11541 / JCM 21823 / NBRC 15573 / CFN 42</strain>
    </source>
</reference>
<sequence>MNELPFWKSKTLAEMTAAEWESLCDGCGLCCLNKIEEWDSGDVYFTSVSCKLLDGHSCRCSSYETRWDFVPDCVQLTRENVPEIAWLPPTCGYRLINEGRDLYWWHPLVSGDPETVHAAGISARGRTINETEIDIDDLEDYVVDWPLTVGEEKNEEEA</sequence>